<gene>
    <name type="primary">nuoG</name>
    <name type="ordered locus">BU159</name>
</gene>
<organism>
    <name type="scientific">Buchnera aphidicola subsp. Acyrthosiphon pisum (strain APS)</name>
    <name type="common">Acyrthosiphon pisum symbiotic bacterium</name>
    <dbReference type="NCBI Taxonomy" id="107806"/>
    <lineage>
        <taxon>Bacteria</taxon>
        <taxon>Pseudomonadati</taxon>
        <taxon>Pseudomonadota</taxon>
        <taxon>Gammaproteobacteria</taxon>
        <taxon>Enterobacterales</taxon>
        <taxon>Erwiniaceae</taxon>
        <taxon>Buchnera</taxon>
    </lineage>
</organism>
<proteinExistence type="inferred from homology"/>
<accession>P57257</accession>
<reference key="1">
    <citation type="journal article" date="2000" name="Nature">
        <title>Genome sequence of the endocellular bacterial symbiont of aphids Buchnera sp. APS.</title>
        <authorList>
            <person name="Shigenobu S."/>
            <person name="Watanabe H."/>
            <person name="Hattori M."/>
            <person name="Sakaki Y."/>
            <person name="Ishikawa H."/>
        </authorList>
    </citation>
    <scope>NUCLEOTIDE SEQUENCE [LARGE SCALE GENOMIC DNA]</scope>
    <source>
        <strain>APS</strain>
    </source>
</reference>
<comment type="function">
    <text evidence="1">NDH-1 shuttles electrons from NADH, via FMN and iron-sulfur (Fe-S) centers, to quinones in the respiratory chain. Couples the redox reaction to proton translocation (for every two electrons transferred, four hydrogen ions are translocated across the cytoplasmic membrane), and thus conserves the redox energy in a proton gradient (By similarity).</text>
</comment>
<comment type="catalytic activity">
    <reaction>
        <text>a quinone + NADH + 5 H(+)(in) = a quinol + NAD(+) + 4 H(+)(out)</text>
        <dbReference type="Rhea" id="RHEA:57888"/>
        <dbReference type="ChEBI" id="CHEBI:15378"/>
        <dbReference type="ChEBI" id="CHEBI:24646"/>
        <dbReference type="ChEBI" id="CHEBI:57540"/>
        <dbReference type="ChEBI" id="CHEBI:57945"/>
        <dbReference type="ChEBI" id="CHEBI:132124"/>
    </reaction>
</comment>
<comment type="cofactor">
    <cofactor evidence="1">
        <name>[2Fe-2S] cluster</name>
        <dbReference type="ChEBI" id="CHEBI:190135"/>
    </cofactor>
    <text evidence="1">Binds 1 [2Fe-2S] cluster per subunit.</text>
</comment>
<comment type="cofactor">
    <cofactor evidence="1">
        <name>[4Fe-4S] cluster</name>
        <dbReference type="ChEBI" id="CHEBI:49883"/>
    </cofactor>
    <text evidence="1">Binds 3 [4Fe-4S] clusters per subunit.</text>
</comment>
<comment type="subunit">
    <text evidence="1">Composed of 13 different subunits. Subunits NuoCD, E, F, and G constitute the peripheral sector of the complex (By similarity).</text>
</comment>
<comment type="similarity">
    <text evidence="6">Belongs to the complex I 75 kDa subunit family.</text>
</comment>
<keyword id="KW-0001">2Fe-2S</keyword>
<keyword id="KW-0004">4Fe-4S</keyword>
<keyword id="KW-0408">Iron</keyword>
<keyword id="KW-0411">Iron-sulfur</keyword>
<keyword id="KW-0479">Metal-binding</keyword>
<keyword id="KW-0520">NAD</keyword>
<keyword id="KW-0874">Quinone</keyword>
<keyword id="KW-1185">Reference proteome</keyword>
<keyword id="KW-1278">Translocase</keyword>
<protein>
    <recommendedName>
        <fullName>NADH-quinone oxidoreductase subunit G</fullName>
        <ecNumber>7.1.1.-</ecNumber>
    </recommendedName>
    <alternativeName>
        <fullName>NADH dehydrogenase I subunit G</fullName>
    </alternativeName>
    <alternativeName>
        <fullName>NDH-1 subunit G</fullName>
    </alternativeName>
</protein>
<name>NUOG_BUCAI</name>
<feature type="chain" id="PRO_0000118542" description="NADH-quinone oxidoreductase subunit G">
    <location>
        <begin position="1"/>
        <end position="906"/>
    </location>
</feature>
<feature type="domain" description="2Fe-2S ferredoxin-type" evidence="3">
    <location>
        <begin position="2"/>
        <end position="83"/>
    </location>
</feature>
<feature type="domain" description="4Fe-4S His(Cys)3-ligated-type" evidence="5">
    <location>
        <begin position="83"/>
        <end position="122"/>
    </location>
</feature>
<feature type="domain" description="4Fe-4S Mo/W bis-MGD-type" evidence="4">
    <location>
        <begin position="221"/>
        <end position="277"/>
    </location>
</feature>
<feature type="binding site" evidence="1">
    <location>
        <position position="34"/>
    </location>
    <ligand>
        <name>[2Fe-2S] cluster</name>
        <dbReference type="ChEBI" id="CHEBI:190135"/>
    </ligand>
</feature>
<feature type="binding site" evidence="1">
    <location>
        <position position="45"/>
    </location>
    <ligand>
        <name>[2Fe-2S] cluster</name>
        <dbReference type="ChEBI" id="CHEBI:190135"/>
    </ligand>
</feature>
<feature type="binding site" evidence="1">
    <location>
        <position position="48"/>
    </location>
    <ligand>
        <name>[2Fe-2S] cluster</name>
        <dbReference type="ChEBI" id="CHEBI:190135"/>
    </ligand>
</feature>
<feature type="binding site" evidence="1">
    <location>
        <position position="67"/>
    </location>
    <ligand>
        <name>[2Fe-2S] cluster</name>
        <dbReference type="ChEBI" id="CHEBI:190135"/>
    </ligand>
</feature>
<feature type="binding site" evidence="5">
    <location>
        <position position="99"/>
    </location>
    <ligand>
        <name>[4Fe-4S] cluster</name>
        <dbReference type="ChEBI" id="CHEBI:49883"/>
        <label>1</label>
    </ligand>
</feature>
<feature type="binding site" evidence="5">
    <location>
        <position position="103"/>
    </location>
    <ligand>
        <name>[4Fe-4S] cluster</name>
        <dbReference type="ChEBI" id="CHEBI:49883"/>
        <label>1</label>
    </ligand>
</feature>
<feature type="binding site" evidence="5">
    <location>
        <position position="106"/>
    </location>
    <ligand>
        <name>[4Fe-4S] cluster</name>
        <dbReference type="ChEBI" id="CHEBI:49883"/>
        <label>1</label>
    </ligand>
</feature>
<feature type="binding site" evidence="5">
    <location>
        <position position="112"/>
    </location>
    <ligand>
        <name>[4Fe-4S] cluster</name>
        <dbReference type="ChEBI" id="CHEBI:49883"/>
        <label>1</label>
    </ligand>
</feature>
<feature type="binding site" evidence="1">
    <location>
        <position position="151"/>
    </location>
    <ligand>
        <name>[4Fe-4S] cluster</name>
        <dbReference type="ChEBI" id="CHEBI:49883"/>
        <label>2</label>
    </ligand>
</feature>
<feature type="binding site" evidence="1">
    <location>
        <position position="154"/>
    </location>
    <ligand>
        <name>[4Fe-4S] cluster</name>
        <dbReference type="ChEBI" id="CHEBI:49883"/>
        <label>2</label>
    </ligand>
</feature>
<feature type="binding site" evidence="1">
    <location>
        <position position="157"/>
    </location>
    <ligand>
        <name>[4Fe-4S] cluster</name>
        <dbReference type="ChEBI" id="CHEBI:49883"/>
        <label>2</label>
    </ligand>
</feature>
<feature type="binding site" evidence="1">
    <location>
        <position position="201"/>
    </location>
    <ligand>
        <name>[4Fe-4S] cluster</name>
        <dbReference type="ChEBI" id="CHEBI:49883"/>
        <label>2</label>
    </ligand>
</feature>
<feature type="binding site" evidence="2">
    <location>
        <position position="228"/>
    </location>
    <ligand>
        <name>[4Fe-4S] cluster</name>
        <dbReference type="ChEBI" id="CHEBI:49883"/>
        <label>3</label>
    </ligand>
</feature>
<feature type="binding site" evidence="2">
    <location>
        <position position="231"/>
    </location>
    <ligand>
        <name>[4Fe-4S] cluster</name>
        <dbReference type="ChEBI" id="CHEBI:49883"/>
        <label>3</label>
    </ligand>
</feature>
<feature type="binding site" evidence="2">
    <location>
        <position position="235"/>
    </location>
    <ligand>
        <name>[4Fe-4S] cluster</name>
        <dbReference type="ChEBI" id="CHEBI:49883"/>
        <label>3</label>
    </ligand>
</feature>
<feature type="binding site" evidence="2">
    <location>
        <position position="263"/>
    </location>
    <ligand>
        <name>[4Fe-4S] cluster</name>
        <dbReference type="ChEBI" id="CHEBI:49883"/>
        <label>3</label>
    </ligand>
</feature>
<sequence length="906" mass="103761">MAKIYVDSKIYNVNESDNLLQACLSVGINIPYFCWHPLLGSLGACRQCAVTQYDNFQDRKGRLIMSCMTPVTDGAIISIKSTESEVFRSAIVELLLTNHPHDCPVCEEGGHCHLQDMTVMVKHSMRNYRFKKRTHKNQYLGPFIKHEMNRCIACYRCVRYYNEYADGVDFGVYGSNNNVYFGRIEDGVLESEHSGNLIELCPTGVFTDKTHSKKYNRKWDMQYAPGICHNCSVGCNISIGERYGEIRRIENRYHENINHYLICDLGRFGYSHTNLNTRPKKPTYVNKYNDLNVLNFNEAIKIGVDFFKRYKRVIGVGSARSSIENNFALQELVGKENFSNGMSNKEKECIKSILEFLKNNYIYIPSLKEIESYDVILVLGEDLTQTSSRVALAVRQAVKKKVQDIKNLYGIPKWNTSSNIHISEKFKNSLYIMHTHESKLDDISEWSYFASIDKQVNLASSIAYEIDKSSPKVSNLDSELKEKVLLISDRLISSKKTLIISGSHSFSDSIIKASINIAKAIKFRAPDHHVGVTLLTSSVNSLGAELLGGMSIESALDDLKKEKADAVIFMEYDLYRSVSEYDCEYFFKNKDNIITLDHQYTQTFKKSMLSLPSTNFTESSGTVINFEGRAQRFFQVYDPNFYDKSNCLCDSWKWLHTIKSKINNTEICWFNLDDVINSYAEKYSIFKQIKTNELNSNLRIHGQKISRSPIRSSGRTSLRSNIDVHEPCQPKDINTMFAFSMEGYNQPNSSVSNIPFAWFPGWNSPQAWNKFQVEVGRNLISGDSGIHIFKKYEKKTDVYSNIVLKNSIKEKYWNIIPYYHLFGNEELTQYSSIIQENTPLEYALIGLSDAIKMGLKKDSIVEFNCLKKDYCLPVQVSKYLTEKQIGLPIGRKGFPLALVGEKIEFL</sequence>
<dbReference type="EC" id="7.1.1.-"/>
<dbReference type="EMBL" id="BA000003">
    <property type="protein sequence ID" value="BAB12877.1"/>
    <property type="molecule type" value="Genomic_DNA"/>
</dbReference>
<dbReference type="RefSeq" id="NP_239991.1">
    <property type="nucleotide sequence ID" value="NC_002528.1"/>
</dbReference>
<dbReference type="RefSeq" id="WP_010895977.1">
    <property type="nucleotide sequence ID" value="NC_002528.1"/>
</dbReference>
<dbReference type="SMR" id="P57257"/>
<dbReference type="STRING" id="563178.BUAP5A_157"/>
<dbReference type="EnsemblBacteria" id="BAB12877">
    <property type="protein sequence ID" value="BAB12877"/>
    <property type="gene ID" value="BAB12877"/>
</dbReference>
<dbReference type="KEGG" id="buc:BU159"/>
<dbReference type="PATRIC" id="fig|107806.10.peg.169"/>
<dbReference type="eggNOG" id="COG1034">
    <property type="taxonomic scope" value="Bacteria"/>
</dbReference>
<dbReference type="HOGENOM" id="CLU_000422_11_4_6"/>
<dbReference type="Proteomes" id="UP000001806">
    <property type="component" value="Chromosome"/>
</dbReference>
<dbReference type="GO" id="GO:0016020">
    <property type="term" value="C:membrane"/>
    <property type="evidence" value="ECO:0007669"/>
    <property type="project" value="InterPro"/>
</dbReference>
<dbReference type="GO" id="GO:0051537">
    <property type="term" value="F:2 iron, 2 sulfur cluster binding"/>
    <property type="evidence" value="ECO:0007669"/>
    <property type="project" value="UniProtKB-KW"/>
</dbReference>
<dbReference type="GO" id="GO:0051539">
    <property type="term" value="F:4 iron, 4 sulfur cluster binding"/>
    <property type="evidence" value="ECO:0007669"/>
    <property type="project" value="UniProtKB-KW"/>
</dbReference>
<dbReference type="GO" id="GO:0046872">
    <property type="term" value="F:metal ion binding"/>
    <property type="evidence" value="ECO:0007669"/>
    <property type="project" value="UniProtKB-KW"/>
</dbReference>
<dbReference type="GO" id="GO:0008137">
    <property type="term" value="F:NADH dehydrogenase (ubiquinone) activity"/>
    <property type="evidence" value="ECO:0007669"/>
    <property type="project" value="InterPro"/>
</dbReference>
<dbReference type="GO" id="GO:0048038">
    <property type="term" value="F:quinone binding"/>
    <property type="evidence" value="ECO:0007669"/>
    <property type="project" value="UniProtKB-KW"/>
</dbReference>
<dbReference type="GO" id="GO:0042773">
    <property type="term" value="P:ATP synthesis coupled electron transport"/>
    <property type="evidence" value="ECO:0007669"/>
    <property type="project" value="InterPro"/>
</dbReference>
<dbReference type="CDD" id="cd00207">
    <property type="entry name" value="fer2"/>
    <property type="match status" value="1"/>
</dbReference>
<dbReference type="CDD" id="cd02788">
    <property type="entry name" value="MopB_CT_NDH-1_NuoG2-N7"/>
    <property type="match status" value="1"/>
</dbReference>
<dbReference type="CDD" id="cd02771">
    <property type="entry name" value="MopB_NDH-1_NuoG2-N7"/>
    <property type="match status" value="1"/>
</dbReference>
<dbReference type="FunFam" id="3.10.20.740:FF:000002">
    <property type="entry name" value="NADH-quinone oxidoreductase"/>
    <property type="match status" value="1"/>
</dbReference>
<dbReference type="Gene3D" id="3.10.20.740">
    <property type="match status" value="1"/>
</dbReference>
<dbReference type="Gene3D" id="3.30.200.210">
    <property type="match status" value="1"/>
</dbReference>
<dbReference type="Gene3D" id="3.40.50.740">
    <property type="match status" value="1"/>
</dbReference>
<dbReference type="InterPro" id="IPR036010">
    <property type="entry name" value="2Fe-2S_ferredoxin-like_sf"/>
</dbReference>
<dbReference type="InterPro" id="IPR001041">
    <property type="entry name" value="2Fe-2S_ferredoxin-type"/>
</dbReference>
<dbReference type="InterPro" id="IPR006656">
    <property type="entry name" value="Mopterin_OxRdtase"/>
</dbReference>
<dbReference type="InterPro" id="IPR006963">
    <property type="entry name" value="Mopterin_OxRdtase_4Fe-4S_dom"/>
</dbReference>
<dbReference type="InterPro" id="IPR000283">
    <property type="entry name" value="NADH_UbQ_OxRdtase_75kDa_su_CS"/>
</dbReference>
<dbReference type="InterPro" id="IPR054351">
    <property type="entry name" value="NADH_UbQ_OxRdtase_ferredoxin"/>
</dbReference>
<dbReference type="InterPro" id="IPR010228">
    <property type="entry name" value="NADH_UbQ_OxRdtase_Gsu"/>
</dbReference>
<dbReference type="InterPro" id="IPR019574">
    <property type="entry name" value="NADH_UbQ_OxRdtase_Gsu_4Fe4S-bd"/>
</dbReference>
<dbReference type="InterPro" id="IPR050123">
    <property type="entry name" value="Prok_molybdopt-oxidoreductase"/>
</dbReference>
<dbReference type="NCBIfam" id="TIGR01973">
    <property type="entry name" value="NuoG"/>
    <property type="match status" value="1"/>
</dbReference>
<dbReference type="PANTHER" id="PTHR43105:SF10">
    <property type="entry name" value="NADH-QUINONE OXIDOREDUCTASE SUBUNIT G"/>
    <property type="match status" value="1"/>
</dbReference>
<dbReference type="PANTHER" id="PTHR43105">
    <property type="entry name" value="RESPIRATORY NITRATE REDUCTASE"/>
    <property type="match status" value="1"/>
</dbReference>
<dbReference type="Pfam" id="PF13510">
    <property type="entry name" value="Fer2_4"/>
    <property type="match status" value="1"/>
</dbReference>
<dbReference type="Pfam" id="PF22117">
    <property type="entry name" value="Fer4_Nqo3"/>
    <property type="match status" value="1"/>
</dbReference>
<dbReference type="Pfam" id="PF04879">
    <property type="entry name" value="Molybdop_Fe4S4"/>
    <property type="match status" value="1"/>
</dbReference>
<dbReference type="Pfam" id="PF00384">
    <property type="entry name" value="Molybdopterin"/>
    <property type="match status" value="1"/>
</dbReference>
<dbReference type="Pfam" id="PF10588">
    <property type="entry name" value="NADH-G_4Fe-4S_3"/>
    <property type="match status" value="1"/>
</dbReference>
<dbReference type="SMART" id="SM00926">
    <property type="entry name" value="Molybdop_Fe4S4"/>
    <property type="match status" value="1"/>
</dbReference>
<dbReference type="SMART" id="SM00929">
    <property type="entry name" value="NADH-G_4Fe-4S_3"/>
    <property type="match status" value="1"/>
</dbReference>
<dbReference type="SUPFAM" id="SSF54292">
    <property type="entry name" value="2Fe-2S ferredoxin-like"/>
    <property type="match status" value="1"/>
</dbReference>
<dbReference type="SUPFAM" id="SSF54862">
    <property type="entry name" value="4Fe-4S ferredoxins"/>
    <property type="match status" value="1"/>
</dbReference>
<dbReference type="SUPFAM" id="SSF53706">
    <property type="entry name" value="Formate dehydrogenase/DMSO reductase, domains 1-3"/>
    <property type="match status" value="1"/>
</dbReference>
<dbReference type="PROSITE" id="PS51085">
    <property type="entry name" value="2FE2S_FER_2"/>
    <property type="match status" value="1"/>
</dbReference>
<dbReference type="PROSITE" id="PS51839">
    <property type="entry name" value="4FE4S_HC3"/>
    <property type="match status" value="1"/>
</dbReference>
<dbReference type="PROSITE" id="PS51669">
    <property type="entry name" value="4FE4S_MOW_BIS_MGD"/>
    <property type="match status" value="1"/>
</dbReference>
<dbReference type="PROSITE" id="PS00641">
    <property type="entry name" value="COMPLEX1_75K_1"/>
    <property type="match status" value="1"/>
</dbReference>
<dbReference type="PROSITE" id="PS00642">
    <property type="entry name" value="COMPLEX1_75K_2"/>
    <property type="match status" value="1"/>
</dbReference>
<dbReference type="PROSITE" id="PS00643">
    <property type="entry name" value="COMPLEX1_75K_3"/>
    <property type="match status" value="1"/>
</dbReference>
<evidence type="ECO:0000250" key="1"/>
<evidence type="ECO:0000255" key="2"/>
<evidence type="ECO:0000255" key="3">
    <source>
        <dbReference type="PROSITE-ProRule" id="PRU00465"/>
    </source>
</evidence>
<evidence type="ECO:0000255" key="4">
    <source>
        <dbReference type="PROSITE-ProRule" id="PRU01004"/>
    </source>
</evidence>
<evidence type="ECO:0000255" key="5">
    <source>
        <dbReference type="PROSITE-ProRule" id="PRU01184"/>
    </source>
</evidence>
<evidence type="ECO:0000305" key="6"/>